<protein>
    <recommendedName>
        <fullName evidence="1">Small ribosomal subunit protein uS5</fullName>
    </recommendedName>
    <alternativeName>
        <fullName evidence="2">30S ribosomal protein S5</fullName>
    </alternativeName>
</protein>
<comment type="function">
    <text evidence="1">With S4 and S12 plays an important role in translational accuracy.</text>
</comment>
<comment type="function">
    <text evidence="1">Located at the back of the 30S subunit body where it stabilizes the conformation of the head with respect to the body.</text>
</comment>
<comment type="subunit">
    <text evidence="1">Part of the 30S ribosomal subunit. Contacts proteins S4 and S8.</text>
</comment>
<comment type="domain">
    <text>The N-terminal domain interacts with the head of the 30S subunit; the C-terminal domain interacts with the body and contacts protein S4. The interaction surface between S4 and S5 is involved in control of translational fidelity.</text>
</comment>
<comment type="similarity">
    <text evidence="1">Belongs to the universal ribosomal protein uS5 family.</text>
</comment>
<proteinExistence type="inferred from homology"/>
<dbReference type="EMBL" id="AP009552">
    <property type="protein sequence ID" value="BAG05549.1"/>
    <property type="molecule type" value="Genomic_DNA"/>
</dbReference>
<dbReference type="RefSeq" id="WP_002733669.1">
    <property type="nucleotide sequence ID" value="NC_010296.1"/>
</dbReference>
<dbReference type="SMR" id="B0JHY7"/>
<dbReference type="STRING" id="449447.MAE_57270"/>
<dbReference type="PaxDb" id="449447-MAE_57270"/>
<dbReference type="EnsemblBacteria" id="BAG05549">
    <property type="protein sequence ID" value="BAG05549"/>
    <property type="gene ID" value="MAE_57270"/>
</dbReference>
<dbReference type="KEGG" id="mar:MAE_57270"/>
<dbReference type="eggNOG" id="COG0098">
    <property type="taxonomic scope" value="Bacteria"/>
</dbReference>
<dbReference type="HOGENOM" id="CLU_065898_2_2_3"/>
<dbReference type="BioCyc" id="MAER449447:MAE_RS24950-MONOMER"/>
<dbReference type="Proteomes" id="UP000001510">
    <property type="component" value="Chromosome"/>
</dbReference>
<dbReference type="GO" id="GO:0015935">
    <property type="term" value="C:small ribosomal subunit"/>
    <property type="evidence" value="ECO:0007669"/>
    <property type="project" value="InterPro"/>
</dbReference>
<dbReference type="GO" id="GO:0019843">
    <property type="term" value="F:rRNA binding"/>
    <property type="evidence" value="ECO:0007669"/>
    <property type="project" value="UniProtKB-UniRule"/>
</dbReference>
<dbReference type="GO" id="GO:0003735">
    <property type="term" value="F:structural constituent of ribosome"/>
    <property type="evidence" value="ECO:0007669"/>
    <property type="project" value="InterPro"/>
</dbReference>
<dbReference type="GO" id="GO:0006412">
    <property type="term" value="P:translation"/>
    <property type="evidence" value="ECO:0007669"/>
    <property type="project" value="UniProtKB-UniRule"/>
</dbReference>
<dbReference type="FunFam" id="3.30.160.20:FF:000001">
    <property type="entry name" value="30S ribosomal protein S5"/>
    <property type="match status" value="1"/>
</dbReference>
<dbReference type="FunFam" id="3.30.230.10:FF:000002">
    <property type="entry name" value="30S ribosomal protein S5"/>
    <property type="match status" value="1"/>
</dbReference>
<dbReference type="Gene3D" id="3.30.160.20">
    <property type="match status" value="1"/>
</dbReference>
<dbReference type="Gene3D" id="3.30.230.10">
    <property type="match status" value="1"/>
</dbReference>
<dbReference type="HAMAP" id="MF_01307_B">
    <property type="entry name" value="Ribosomal_uS5_B"/>
    <property type="match status" value="1"/>
</dbReference>
<dbReference type="InterPro" id="IPR020568">
    <property type="entry name" value="Ribosomal_Su5_D2-typ_SF"/>
</dbReference>
<dbReference type="InterPro" id="IPR000851">
    <property type="entry name" value="Ribosomal_uS5"/>
</dbReference>
<dbReference type="InterPro" id="IPR005712">
    <property type="entry name" value="Ribosomal_uS5_bac-type"/>
</dbReference>
<dbReference type="InterPro" id="IPR005324">
    <property type="entry name" value="Ribosomal_uS5_C"/>
</dbReference>
<dbReference type="InterPro" id="IPR013810">
    <property type="entry name" value="Ribosomal_uS5_N"/>
</dbReference>
<dbReference type="InterPro" id="IPR018192">
    <property type="entry name" value="Ribosomal_uS5_N_CS"/>
</dbReference>
<dbReference type="InterPro" id="IPR014721">
    <property type="entry name" value="Ribsml_uS5_D2-typ_fold_subgr"/>
</dbReference>
<dbReference type="NCBIfam" id="TIGR01021">
    <property type="entry name" value="rpsE_bact"/>
    <property type="match status" value="1"/>
</dbReference>
<dbReference type="PANTHER" id="PTHR48277">
    <property type="entry name" value="MITOCHONDRIAL RIBOSOMAL PROTEIN S5"/>
    <property type="match status" value="1"/>
</dbReference>
<dbReference type="PANTHER" id="PTHR48277:SF1">
    <property type="entry name" value="MITOCHONDRIAL RIBOSOMAL PROTEIN S5"/>
    <property type="match status" value="1"/>
</dbReference>
<dbReference type="Pfam" id="PF00333">
    <property type="entry name" value="Ribosomal_S5"/>
    <property type="match status" value="1"/>
</dbReference>
<dbReference type="Pfam" id="PF03719">
    <property type="entry name" value="Ribosomal_S5_C"/>
    <property type="match status" value="1"/>
</dbReference>
<dbReference type="SUPFAM" id="SSF54768">
    <property type="entry name" value="dsRNA-binding domain-like"/>
    <property type="match status" value="1"/>
</dbReference>
<dbReference type="SUPFAM" id="SSF54211">
    <property type="entry name" value="Ribosomal protein S5 domain 2-like"/>
    <property type="match status" value="1"/>
</dbReference>
<dbReference type="PROSITE" id="PS00585">
    <property type="entry name" value="RIBOSOMAL_S5"/>
    <property type="match status" value="1"/>
</dbReference>
<dbReference type="PROSITE" id="PS50881">
    <property type="entry name" value="S5_DSRBD"/>
    <property type="match status" value="1"/>
</dbReference>
<reference key="1">
    <citation type="journal article" date="2007" name="DNA Res.">
        <title>Complete genomic structure of the bloom-forming toxic cyanobacterium Microcystis aeruginosa NIES-843.</title>
        <authorList>
            <person name="Kaneko T."/>
            <person name="Nakajima N."/>
            <person name="Okamoto S."/>
            <person name="Suzuki I."/>
            <person name="Tanabe Y."/>
            <person name="Tamaoki M."/>
            <person name="Nakamura Y."/>
            <person name="Kasai F."/>
            <person name="Watanabe A."/>
            <person name="Kawashima K."/>
            <person name="Kishida Y."/>
            <person name="Ono A."/>
            <person name="Shimizu Y."/>
            <person name="Takahashi C."/>
            <person name="Minami C."/>
            <person name="Fujishiro T."/>
            <person name="Kohara M."/>
            <person name="Katoh M."/>
            <person name="Nakazaki N."/>
            <person name="Nakayama S."/>
            <person name="Yamada M."/>
            <person name="Tabata S."/>
            <person name="Watanabe M.M."/>
        </authorList>
    </citation>
    <scope>NUCLEOTIDE SEQUENCE [LARGE SCALE GENOMIC DNA]</scope>
    <source>
        <strain>NIES-843 / IAM M-247</strain>
    </source>
</reference>
<feature type="chain" id="PRO_1000140871" description="Small ribosomal subunit protein uS5">
    <location>
        <begin position="1"/>
        <end position="173"/>
    </location>
</feature>
<feature type="domain" description="S5 DRBM" evidence="1">
    <location>
        <begin position="17"/>
        <end position="80"/>
    </location>
</feature>
<organism>
    <name type="scientific">Microcystis aeruginosa (strain NIES-843 / IAM M-2473)</name>
    <dbReference type="NCBI Taxonomy" id="449447"/>
    <lineage>
        <taxon>Bacteria</taxon>
        <taxon>Bacillati</taxon>
        <taxon>Cyanobacteriota</taxon>
        <taxon>Cyanophyceae</taxon>
        <taxon>Oscillatoriophycideae</taxon>
        <taxon>Chroococcales</taxon>
        <taxon>Microcystaceae</taxon>
        <taxon>Microcystis</taxon>
    </lineage>
</organism>
<keyword id="KW-0687">Ribonucleoprotein</keyword>
<keyword id="KW-0689">Ribosomal protein</keyword>
<keyword id="KW-0694">RNA-binding</keyword>
<keyword id="KW-0699">rRNA-binding</keyword>
<sequence length="173" mass="18231">MAKRRKGNREKEKETTWQERVIQIRRVSKVVKGGKKLSFRAIVVVGNENGQVGVGVGKAGDVIGAVRKGVADGKKQLIEVSLTKASSITHLTRGASGGAQVIMRPAAPGTGVIAGGAVRTVLELAGVKNILAKQLGSDNPLNNARAAVNALETLRTFSEVAKDRGVSIEHLYT</sequence>
<name>RS5_MICAN</name>
<gene>
    <name evidence="1" type="primary">rpsE</name>
    <name evidence="1" type="synonym">rps5</name>
    <name type="ordered locus">MAE_57270</name>
</gene>
<accession>B0JHY7</accession>
<evidence type="ECO:0000255" key="1">
    <source>
        <dbReference type="HAMAP-Rule" id="MF_01307"/>
    </source>
</evidence>
<evidence type="ECO:0000305" key="2"/>